<protein>
    <recommendedName>
        <fullName evidence="1">UPF0304 protein MS2240</fullName>
    </recommendedName>
</protein>
<dbReference type="EMBL" id="AE016827">
    <property type="protein sequence ID" value="AAU38847.1"/>
    <property type="molecule type" value="Genomic_DNA"/>
</dbReference>
<dbReference type="RefSeq" id="WP_011201391.1">
    <property type="nucleotide sequence ID" value="NC_006300.1"/>
</dbReference>
<dbReference type="SMR" id="Q65QB3"/>
<dbReference type="STRING" id="221988.MS2240"/>
<dbReference type="KEGG" id="msu:MS2240"/>
<dbReference type="eggNOG" id="COG3013">
    <property type="taxonomic scope" value="Bacteria"/>
</dbReference>
<dbReference type="HOGENOM" id="CLU_101021_1_0_6"/>
<dbReference type="OrthoDB" id="5589463at2"/>
<dbReference type="Proteomes" id="UP000000607">
    <property type="component" value="Chromosome"/>
</dbReference>
<dbReference type="Gene3D" id="1.10.287.680">
    <property type="entry name" value="Helix hairpin bin"/>
    <property type="match status" value="1"/>
</dbReference>
<dbReference type="Gene3D" id="1.10.3190.10">
    <property type="entry name" value="yfbu gene product, domain 2"/>
    <property type="match status" value="1"/>
</dbReference>
<dbReference type="HAMAP" id="MF_00762">
    <property type="entry name" value="UPF0304"/>
    <property type="match status" value="1"/>
</dbReference>
<dbReference type="InterPro" id="IPR005587">
    <property type="entry name" value="UPF0304_YfbU"/>
</dbReference>
<dbReference type="InterPro" id="IPR023146">
    <property type="entry name" value="YfbU_alpha-helical_sf"/>
</dbReference>
<dbReference type="InterPro" id="IPR023145">
    <property type="entry name" value="YfbU_helix-hairpin_sf"/>
</dbReference>
<dbReference type="NCBIfam" id="NF003936">
    <property type="entry name" value="PRK05445.1"/>
    <property type="match status" value="1"/>
</dbReference>
<dbReference type="Pfam" id="PF03887">
    <property type="entry name" value="YfbU"/>
    <property type="match status" value="1"/>
</dbReference>
<dbReference type="PIRSF" id="PIRSF006272">
    <property type="entry name" value="UCP006272"/>
    <property type="match status" value="1"/>
</dbReference>
<dbReference type="SUPFAM" id="SSF116960">
    <property type="entry name" value="YfbU-like"/>
    <property type="match status" value="1"/>
</dbReference>
<proteinExistence type="inferred from homology"/>
<reference key="1">
    <citation type="journal article" date="2004" name="Nat. Biotechnol.">
        <title>The genome sequence of the capnophilic rumen bacterium Mannheimia succiniciproducens.</title>
        <authorList>
            <person name="Hong S.H."/>
            <person name="Kim J.S."/>
            <person name="Lee S.Y."/>
            <person name="In Y.H."/>
            <person name="Choi S.S."/>
            <person name="Rih J.-K."/>
            <person name="Kim C.H."/>
            <person name="Jeong H."/>
            <person name="Hur C.G."/>
            <person name="Kim J.J."/>
        </authorList>
    </citation>
    <scope>NUCLEOTIDE SEQUENCE [LARGE SCALE GENOMIC DNA]</scope>
    <source>
        <strain>KCTC 0769BP / MBEL55E</strain>
    </source>
</reference>
<name>Y2240_MANSM</name>
<feature type="chain" id="PRO_1000046762" description="UPF0304 protein MS2240">
    <location>
        <begin position="1"/>
        <end position="164"/>
    </location>
</feature>
<sequence length="164" mass="19101">MEMTSTQRLILANQYKLMGLLDPANAQKYARLETIVKGGFSLELKELDNEFLAISEAECQTVLETLEMYHALQVSYENLADKSDLTAHRLQFIGYDAIRERKYLNYLRFITGIEGKYQEFMRCAPGCDSQTPMWDKYNKMLDMWKACPHQYHLSLVEIQNILNA</sequence>
<evidence type="ECO:0000255" key="1">
    <source>
        <dbReference type="HAMAP-Rule" id="MF_00762"/>
    </source>
</evidence>
<organism>
    <name type="scientific">Mannheimia succiniciproducens (strain KCTC 0769BP / MBEL55E)</name>
    <dbReference type="NCBI Taxonomy" id="221988"/>
    <lineage>
        <taxon>Bacteria</taxon>
        <taxon>Pseudomonadati</taxon>
        <taxon>Pseudomonadota</taxon>
        <taxon>Gammaproteobacteria</taxon>
        <taxon>Pasteurellales</taxon>
        <taxon>Pasteurellaceae</taxon>
        <taxon>Basfia</taxon>
    </lineage>
</organism>
<accession>Q65QB3</accession>
<gene>
    <name type="ordered locus">MS2240</name>
</gene>
<comment type="similarity">
    <text evidence="1">Belongs to the UPF0304 family.</text>
</comment>